<dbReference type="EC" id="1.4.3.5" evidence="1"/>
<dbReference type="EMBL" id="CR378681">
    <property type="protein sequence ID" value="CAG23860.1"/>
    <property type="molecule type" value="Genomic_DNA"/>
</dbReference>
<dbReference type="RefSeq" id="WP_011221994.1">
    <property type="nucleotide sequence ID" value="NC_006371.1"/>
</dbReference>
<dbReference type="SMR" id="Q6LFS0"/>
<dbReference type="STRING" id="298386.PBPRB2015"/>
<dbReference type="KEGG" id="ppr:PBPRB2015"/>
<dbReference type="eggNOG" id="COG0259">
    <property type="taxonomic scope" value="Bacteria"/>
</dbReference>
<dbReference type="HOGENOM" id="CLU_032263_2_3_6"/>
<dbReference type="UniPathway" id="UPA01068">
    <property type="reaction ID" value="UER00304"/>
</dbReference>
<dbReference type="UniPathway" id="UPA01068">
    <property type="reaction ID" value="UER00305"/>
</dbReference>
<dbReference type="Proteomes" id="UP000000593">
    <property type="component" value="Chromosome 2"/>
</dbReference>
<dbReference type="GO" id="GO:0010181">
    <property type="term" value="F:FMN binding"/>
    <property type="evidence" value="ECO:0007669"/>
    <property type="project" value="UniProtKB-UniRule"/>
</dbReference>
<dbReference type="GO" id="GO:0004733">
    <property type="term" value="F:pyridoxamine phosphate oxidase activity"/>
    <property type="evidence" value="ECO:0007669"/>
    <property type="project" value="UniProtKB-UniRule"/>
</dbReference>
<dbReference type="GO" id="GO:0008615">
    <property type="term" value="P:pyridoxine biosynthetic process"/>
    <property type="evidence" value="ECO:0007669"/>
    <property type="project" value="UniProtKB-KW"/>
</dbReference>
<dbReference type="Gene3D" id="2.30.110.10">
    <property type="entry name" value="Electron Transport, Fmn-binding Protein, Chain A"/>
    <property type="match status" value="1"/>
</dbReference>
<dbReference type="HAMAP" id="MF_01629">
    <property type="entry name" value="PdxH"/>
    <property type="match status" value="1"/>
</dbReference>
<dbReference type="InterPro" id="IPR000659">
    <property type="entry name" value="Pyridox_Oxase"/>
</dbReference>
<dbReference type="InterPro" id="IPR019740">
    <property type="entry name" value="Pyridox_Oxase_CS"/>
</dbReference>
<dbReference type="InterPro" id="IPR011576">
    <property type="entry name" value="Pyridox_Oxase_N"/>
</dbReference>
<dbReference type="InterPro" id="IPR019576">
    <property type="entry name" value="Pyridoxamine_oxidase_dimer_C"/>
</dbReference>
<dbReference type="InterPro" id="IPR012349">
    <property type="entry name" value="Split_barrel_FMN-bd"/>
</dbReference>
<dbReference type="NCBIfam" id="TIGR00558">
    <property type="entry name" value="pdxH"/>
    <property type="match status" value="1"/>
</dbReference>
<dbReference type="NCBIfam" id="NF004231">
    <property type="entry name" value="PRK05679.1"/>
    <property type="match status" value="1"/>
</dbReference>
<dbReference type="PANTHER" id="PTHR10851:SF0">
    <property type="entry name" value="PYRIDOXINE-5'-PHOSPHATE OXIDASE"/>
    <property type="match status" value="1"/>
</dbReference>
<dbReference type="PANTHER" id="PTHR10851">
    <property type="entry name" value="PYRIDOXINE-5-PHOSPHATE OXIDASE"/>
    <property type="match status" value="1"/>
</dbReference>
<dbReference type="Pfam" id="PF10590">
    <property type="entry name" value="PNP_phzG_C"/>
    <property type="match status" value="1"/>
</dbReference>
<dbReference type="Pfam" id="PF01243">
    <property type="entry name" value="PNPOx_N"/>
    <property type="match status" value="1"/>
</dbReference>
<dbReference type="PIRSF" id="PIRSF000190">
    <property type="entry name" value="Pyd_amn-ph_oxd"/>
    <property type="match status" value="1"/>
</dbReference>
<dbReference type="SUPFAM" id="SSF50475">
    <property type="entry name" value="FMN-binding split barrel"/>
    <property type="match status" value="1"/>
</dbReference>
<dbReference type="PROSITE" id="PS01064">
    <property type="entry name" value="PYRIDOX_OXIDASE"/>
    <property type="match status" value="1"/>
</dbReference>
<comment type="function">
    <text evidence="1">Catalyzes the oxidation of either pyridoxine 5'-phosphate (PNP) or pyridoxamine 5'-phosphate (PMP) into pyridoxal 5'-phosphate (PLP).</text>
</comment>
<comment type="catalytic activity">
    <reaction evidence="1">
        <text>pyridoxamine 5'-phosphate + O2 + H2O = pyridoxal 5'-phosphate + H2O2 + NH4(+)</text>
        <dbReference type="Rhea" id="RHEA:15817"/>
        <dbReference type="ChEBI" id="CHEBI:15377"/>
        <dbReference type="ChEBI" id="CHEBI:15379"/>
        <dbReference type="ChEBI" id="CHEBI:16240"/>
        <dbReference type="ChEBI" id="CHEBI:28938"/>
        <dbReference type="ChEBI" id="CHEBI:58451"/>
        <dbReference type="ChEBI" id="CHEBI:597326"/>
        <dbReference type="EC" id="1.4.3.5"/>
    </reaction>
</comment>
<comment type="catalytic activity">
    <reaction evidence="1">
        <text>pyridoxine 5'-phosphate + O2 = pyridoxal 5'-phosphate + H2O2</text>
        <dbReference type="Rhea" id="RHEA:15149"/>
        <dbReference type="ChEBI" id="CHEBI:15379"/>
        <dbReference type="ChEBI" id="CHEBI:16240"/>
        <dbReference type="ChEBI" id="CHEBI:58589"/>
        <dbReference type="ChEBI" id="CHEBI:597326"/>
        <dbReference type="EC" id="1.4.3.5"/>
    </reaction>
</comment>
<comment type="cofactor">
    <cofactor evidence="1">
        <name>FMN</name>
        <dbReference type="ChEBI" id="CHEBI:58210"/>
    </cofactor>
    <text evidence="1">Binds 1 FMN per subunit.</text>
</comment>
<comment type="pathway">
    <text evidence="1">Cofactor metabolism; pyridoxal 5'-phosphate salvage; pyridoxal 5'-phosphate from pyridoxamine 5'-phosphate: step 1/1.</text>
</comment>
<comment type="pathway">
    <text evidence="1">Cofactor metabolism; pyridoxal 5'-phosphate salvage; pyridoxal 5'-phosphate from pyridoxine 5'-phosphate: step 1/1.</text>
</comment>
<comment type="subunit">
    <text evidence="1">Homodimer.</text>
</comment>
<comment type="similarity">
    <text evidence="1">Belongs to the pyridoxamine 5'-phosphate oxidase family.</text>
</comment>
<feature type="chain" id="PRO_0000167731" description="Pyridoxine/pyridoxamine 5'-phosphate oxidase">
    <location>
        <begin position="1"/>
        <end position="211"/>
    </location>
</feature>
<feature type="binding site" evidence="1">
    <location>
        <begin position="7"/>
        <end position="10"/>
    </location>
    <ligand>
        <name>substrate</name>
    </ligand>
</feature>
<feature type="binding site" evidence="1">
    <location>
        <begin position="60"/>
        <end position="65"/>
    </location>
    <ligand>
        <name>FMN</name>
        <dbReference type="ChEBI" id="CHEBI:58210"/>
    </ligand>
</feature>
<feature type="binding site" evidence="1">
    <location>
        <position position="65"/>
    </location>
    <ligand>
        <name>substrate</name>
    </ligand>
</feature>
<feature type="binding site" evidence="1">
    <location>
        <begin position="75"/>
        <end position="76"/>
    </location>
    <ligand>
        <name>FMN</name>
        <dbReference type="ChEBI" id="CHEBI:58210"/>
    </ligand>
</feature>
<feature type="binding site" evidence="1">
    <location>
        <position position="81"/>
    </location>
    <ligand>
        <name>FMN</name>
        <dbReference type="ChEBI" id="CHEBI:58210"/>
    </ligand>
</feature>
<feature type="binding site" evidence="1">
    <location>
        <position position="82"/>
    </location>
    <ligand>
        <name>FMN</name>
        <dbReference type="ChEBI" id="CHEBI:58210"/>
    </ligand>
</feature>
<feature type="binding site" evidence="1">
    <location>
        <position position="104"/>
    </location>
    <ligand>
        <name>FMN</name>
        <dbReference type="ChEBI" id="CHEBI:58210"/>
    </ligand>
</feature>
<feature type="binding site" evidence="1">
    <location>
        <position position="122"/>
    </location>
    <ligand>
        <name>substrate</name>
    </ligand>
</feature>
<feature type="binding site" evidence="1">
    <location>
        <position position="126"/>
    </location>
    <ligand>
        <name>substrate</name>
    </ligand>
</feature>
<feature type="binding site" evidence="1">
    <location>
        <position position="130"/>
    </location>
    <ligand>
        <name>substrate</name>
    </ligand>
</feature>
<feature type="binding site" evidence="1">
    <location>
        <begin position="139"/>
        <end position="140"/>
    </location>
    <ligand>
        <name>FMN</name>
        <dbReference type="ChEBI" id="CHEBI:58210"/>
    </ligand>
</feature>
<feature type="binding site" evidence="1">
    <location>
        <position position="184"/>
    </location>
    <ligand>
        <name>FMN</name>
        <dbReference type="ChEBI" id="CHEBI:58210"/>
    </ligand>
</feature>
<feature type="binding site" evidence="1">
    <location>
        <begin position="190"/>
        <end position="192"/>
    </location>
    <ligand>
        <name>substrate</name>
    </ligand>
</feature>
<feature type="binding site" evidence="1">
    <location>
        <position position="194"/>
    </location>
    <ligand>
        <name>FMN</name>
        <dbReference type="ChEBI" id="CHEBI:58210"/>
    </ligand>
</feature>
<reference key="1">
    <citation type="journal article" date="2005" name="Science">
        <title>Life at depth: Photobacterium profundum genome sequence and expression analysis.</title>
        <authorList>
            <person name="Vezzi A."/>
            <person name="Campanaro S."/>
            <person name="D'Angelo M."/>
            <person name="Simonato F."/>
            <person name="Vitulo N."/>
            <person name="Lauro F.M."/>
            <person name="Cestaro A."/>
            <person name="Malacrida G."/>
            <person name="Simionati B."/>
            <person name="Cannata N."/>
            <person name="Romualdi C."/>
            <person name="Bartlett D.H."/>
            <person name="Valle G."/>
        </authorList>
    </citation>
    <scope>NUCLEOTIDE SEQUENCE [LARGE SCALE GENOMIC DNA]</scope>
    <source>
        <strain>ATCC BAA-1253 / SS9</strain>
    </source>
</reference>
<accession>Q6LFS0</accession>
<sequence>MDLSDIRREYTRGGLRRNDLPDEPLPLFKKWLQQAIDAKIADPTAMTVATVDESGQPFQRIVLLKHFDRDGFIFYTNLGSRKALHLSHNSKISLHFPWHAIERQVHITGEVEKLSSLEVMKYFTSRPKESQIAAWASKQSNRISARQALEGKYLELKQKFAQGKVPVPTFWGGYRVKINSIEFWQGGENRLHDRFIYSHESSHWNIDRLAP</sequence>
<evidence type="ECO:0000255" key="1">
    <source>
        <dbReference type="HAMAP-Rule" id="MF_01629"/>
    </source>
</evidence>
<proteinExistence type="inferred from homology"/>
<keyword id="KW-0285">Flavoprotein</keyword>
<keyword id="KW-0288">FMN</keyword>
<keyword id="KW-0560">Oxidoreductase</keyword>
<keyword id="KW-0664">Pyridoxine biosynthesis</keyword>
<keyword id="KW-1185">Reference proteome</keyword>
<gene>
    <name evidence="1" type="primary">pdxH</name>
    <name type="ordered locus">PBPRB2015</name>
</gene>
<name>PDXH_PHOPR</name>
<protein>
    <recommendedName>
        <fullName evidence="1">Pyridoxine/pyridoxamine 5'-phosphate oxidase</fullName>
        <ecNumber evidence="1">1.4.3.5</ecNumber>
    </recommendedName>
    <alternativeName>
        <fullName evidence="1">PNP/PMP oxidase</fullName>
        <shortName evidence="1">PNPOx</shortName>
    </alternativeName>
    <alternativeName>
        <fullName evidence="1">Pyridoxal 5'-phosphate synthase</fullName>
    </alternativeName>
</protein>
<organism>
    <name type="scientific">Photobacterium profundum (strain SS9)</name>
    <dbReference type="NCBI Taxonomy" id="298386"/>
    <lineage>
        <taxon>Bacteria</taxon>
        <taxon>Pseudomonadati</taxon>
        <taxon>Pseudomonadota</taxon>
        <taxon>Gammaproteobacteria</taxon>
        <taxon>Vibrionales</taxon>
        <taxon>Vibrionaceae</taxon>
        <taxon>Photobacterium</taxon>
    </lineage>
</organism>